<organism>
    <name type="scientific">Nitrosococcus oceani (strain ATCC 19707 / BCRC 17464 / JCM 30415 / NCIMB 11848 / C-107)</name>
    <dbReference type="NCBI Taxonomy" id="323261"/>
    <lineage>
        <taxon>Bacteria</taxon>
        <taxon>Pseudomonadati</taxon>
        <taxon>Pseudomonadota</taxon>
        <taxon>Gammaproteobacteria</taxon>
        <taxon>Chromatiales</taxon>
        <taxon>Chromatiaceae</taxon>
        <taxon>Nitrosococcus</taxon>
    </lineage>
</organism>
<proteinExistence type="inferred from homology"/>
<name>RL24_NITOC</name>
<dbReference type="EMBL" id="CP000127">
    <property type="protein sequence ID" value="ABA58771.1"/>
    <property type="molecule type" value="Genomic_DNA"/>
</dbReference>
<dbReference type="RefSeq" id="WP_002811633.1">
    <property type="nucleotide sequence ID" value="NC_007484.1"/>
</dbReference>
<dbReference type="SMR" id="Q3J8S5"/>
<dbReference type="FunCoup" id="Q3J8S5">
    <property type="interactions" value="621"/>
</dbReference>
<dbReference type="STRING" id="323261.Noc_2313"/>
<dbReference type="KEGG" id="noc:Noc_2313"/>
<dbReference type="eggNOG" id="COG0198">
    <property type="taxonomic scope" value="Bacteria"/>
</dbReference>
<dbReference type="HOGENOM" id="CLU_093315_2_2_6"/>
<dbReference type="InParanoid" id="Q3J8S5"/>
<dbReference type="Proteomes" id="UP000006838">
    <property type="component" value="Chromosome"/>
</dbReference>
<dbReference type="GO" id="GO:1990904">
    <property type="term" value="C:ribonucleoprotein complex"/>
    <property type="evidence" value="ECO:0007669"/>
    <property type="project" value="UniProtKB-KW"/>
</dbReference>
<dbReference type="GO" id="GO:0005840">
    <property type="term" value="C:ribosome"/>
    <property type="evidence" value="ECO:0007669"/>
    <property type="project" value="UniProtKB-KW"/>
</dbReference>
<dbReference type="GO" id="GO:0019843">
    <property type="term" value="F:rRNA binding"/>
    <property type="evidence" value="ECO:0007669"/>
    <property type="project" value="UniProtKB-UniRule"/>
</dbReference>
<dbReference type="GO" id="GO:0003735">
    <property type="term" value="F:structural constituent of ribosome"/>
    <property type="evidence" value="ECO:0007669"/>
    <property type="project" value="InterPro"/>
</dbReference>
<dbReference type="GO" id="GO:0006412">
    <property type="term" value="P:translation"/>
    <property type="evidence" value="ECO:0007669"/>
    <property type="project" value="UniProtKB-UniRule"/>
</dbReference>
<dbReference type="CDD" id="cd06089">
    <property type="entry name" value="KOW_RPL26"/>
    <property type="match status" value="1"/>
</dbReference>
<dbReference type="FunFam" id="2.30.30.30:FF:000004">
    <property type="entry name" value="50S ribosomal protein L24"/>
    <property type="match status" value="1"/>
</dbReference>
<dbReference type="Gene3D" id="2.30.30.30">
    <property type="match status" value="1"/>
</dbReference>
<dbReference type="HAMAP" id="MF_01326_B">
    <property type="entry name" value="Ribosomal_uL24_B"/>
    <property type="match status" value="1"/>
</dbReference>
<dbReference type="InterPro" id="IPR005824">
    <property type="entry name" value="KOW"/>
</dbReference>
<dbReference type="InterPro" id="IPR014722">
    <property type="entry name" value="Rib_uL2_dom2"/>
</dbReference>
<dbReference type="InterPro" id="IPR003256">
    <property type="entry name" value="Ribosomal_uL24"/>
</dbReference>
<dbReference type="InterPro" id="IPR041988">
    <property type="entry name" value="Ribosomal_uL24_KOW"/>
</dbReference>
<dbReference type="InterPro" id="IPR008991">
    <property type="entry name" value="Translation_prot_SH3-like_sf"/>
</dbReference>
<dbReference type="NCBIfam" id="TIGR01079">
    <property type="entry name" value="rplX_bact"/>
    <property type="match status" value="1"/>
</dbReference>
<dbReference type="PANTHER" id="PTHR12903">
    <property type="entry name" value="MITOCHONDRIAL RIBOSOMAL PROTEIN L24"/>
    <property type="match status" value="1"/>
</dbReference>
<dbReference type="Pfam" id="PF00467">
    <property type="entry name" value="KOW"/>
    <property type="match status" value="1"/>
</dbReference>
<dbReference type="Pfam" id="PF17136">
    <property type="entry name" value="ribosomal_L24"/>
    <property type="match status" value="1"/>
</dbReference>
<dbReference type="SMART" id="SM00739">
    <property type="entry name" value="KOW"/>
    <property type="match status" value="1"/>
</dbReference>
<dbReference type="SUPFAM" id="SSF50104">
    <property type="entry name" value="Translation proteins SH3-like domain"/>
    <property type="match status" value="1"/>
</dbReference>
<gene>
    <name evidence="1" type="primary">rplX</name>
    <name type="ordered locus">Noc_2313</name>
</gene>
<comment type="function">
    <text evidence="1">One of two assembly initiator proteins, it binds directly to the 5'-end of the 23S rRNA, where it nucleates assembly of the 50S subunit.</text>
</comment>
<comment type="function">
    <text evidence="1">One of the proteins that surrounds the polypeptide exit tunnel on the outside of the subunit.</text>
</comment>
<comment type="subunit">
    <text evidence="1">Part of the 50S ribosomal subunit.</text>
</comment>
<comment type="similarity">
    <text evidence="1">Belongs to the universal ribosomal protein uL24 family.</text>
</comment>
<reference key="1">
    <citation type="journal article" date="2006" name="Appl. Environ. Microbiol.">
        <title>Complete genome sequence of the marine, chemolithoautotrophic, ammonia-oxidizing bacterium Nitrosococcus oceani ATCC 19707.</title>
        <authorList>
            <person name="Klotz M.G."/>
            <person name="Arp D.J."/>
            <person name="Chain P.S.G."/>
            <person name="El-Sheikh A.F."/>
            <person name="Hauser L.J."/>
            <person name="Hommes N.G."/>
            <person name="Larimer F.W."/>
            <person name="Malfatti S.A."/>
            <person name="Norton J.M."/>
            <person name="Poret-Peterson A.T."/>
            <person name="Vergez L.M."/>
            <person name="Ward B.B."/>
        </authorList>
    </citation>
    <scope>NUCLEOTIDE SEQUENCE [LARGE SCALE GENOMIC DNA]</scope>
    <source>
        <strain>ATCC 19707 / BCRC 17464 / JCM 30415 / NCIMB 11848 / C-107</strain>
    </source>
</reference>
<accession>Q3J8S5</accession>
<keyword id="KW-1185">Reference proteome</keyword>
<keyword id="KW-0687">Ribonucleoprotein</keyword>
<keyword id="KW-0689">Ribosomal protein</keyword>
<keyword id="KW-0694">RNA-binding</keyword>
<keyword id="KW-0699">rRNA-binding</keyword>
<protein>
    <recommendedName>
        <fullName evidence="1">Large ribosomal subunit protein uL24</fullName>
    </recommendedName>
    <alternativeName>
        <fullName evidence="2">50S ribosomal protein L24</fullName>
    </alternativeName>
</protein>
<evidence type="ECO:0000255" key="1">
    <source>
        <dbReference type="HAMAP-Rule" id="MF_01326"/>
    </source>
</evidence>
<evidence type="ECO:0000305" key="2"/>
<sequence length="105" mass="11953">MRRVRVGDEVIVTAGRSKGKQGKILRILGDERVIVQDVNMVKRHTRPNPTANKPGGIIEREASIHISNVMLYNPATEKGDRIGFRRLEDGRKVRYFKSNDEIIDV</sequence>
<feature type="chain" id="PRO_0000241628" description="Large ribosomal subunit protein uL24">
    <location>
        <begin position="1"/>
        <end position="105"/>
    </location>
</feature>